<name>YAP3_YEAST</name>
<evidence type="ECO:0000250" key="1"/>
<evidence type="ECO:0000255" key="2">
    <source>
        <dbReference type="PROSITE-ProRule" id="PRU00978"/>
    </source>
</evidence>
<evidence type="ECO:0000256" key="3">
    <source>
        <dbReference type="SAM" id="MobiDB-lite"/>
    </source>
</evidence>
<evidence type="ECO:0000269" key="4">
    <source>
    </source>
</evidence>
<evidence type="ECO:0000269" key="5">
    <source>
    </source>
</evidence>
<evidence type="ECO:0000269" key="6">
    <source>
    </source>
</evidence>
<evidence type="ECO:0000269" key="7">
    <source>
    </source>
</evidence>
<evidence type="ECO:0000269" key="8">
    <source>
    </source>
</evidence>
<evidence type="ECO:0000269" key="9">
    <source>
    </source>
</evidence>
<evidence type="ECO:0000305" key="10"/>
<evidence type="ECO:0007744" key="11">
    <source>
    </source>
</evidence>
<reference key="1">
    <citation type="journal article" date="1994" name="Science">
        <title>Complete nucleotide sequence of Saccharomyces cerevisiae chromosome VIII.</title>
        <authorList>
            <person name="Johnston M."/>
            <person name="Andrews S."/>
            <person name="Brinkman R."/>
            <person name="Cooper J."/>
            <person name="Ding H."/>
            <person name="Dover J."/>
            <person name="Du Z."/>
            <person name="Favello A."/>
            <person name="Fulton L."/>
            <person name="Gattung S."/>
            <person name="Geisel C."/>
            <person name="Kirsten J."/>
            <person name="Kucaba T."/>
            <person name="Hillier L.W."/>
            <person name="Jier M."/>
            <person name="Johnston L."/>
            <person name="Langston Y."/>
            <person name="Latreille P."/>
            <person name="Louis E.J."/>
            <person name="Macri C."/>
            <person name="Mardis E."/>
            <person name="Menezes S."/>
            <person name="Mouser L."/>
            <person name="Nhan M."/>
            <person name="Rifkin L."/>
            <person name="Riles L."/>
            <person name="St Peter H."/>
            <person name="Trevaskis E."/>
            <person name="Vaughan K."/>
            <person name="Vignati D."/>
            <person name="Wilcox L."/>
            <person name="Wohldman P."/>
            <person name="Waterston R."/>
            <person name="Wilson R."/>
            <person name="Vaudin M."/>
        </authorList>
    </citation>
    <scope>NUCLEOTIDE SEQUENCE [LARGE SCALE GENOMIC DNA]</scope>
    <source>
        <strain>ATCC 204508 / S288c</strain>
    </source>
</reference>
<reference key="2">
    <citation type="journal article" date="2014" name="G3 (Bethesda)">
        <title>The reference genome sequence of Saccharomyces cerevisiae: Then and now.</title>
        <authorList>
            <person name="Engel S.R."/>
            <person name="Dietrich F.S."/>
            <person name="Fisk D.G."/>
            <person name="Binkley G."/>
            <person name="Balakrishnan R."/>
            <person name="Costanzo M.C."/>
            <person name="Dwight S.S."/>
            <person name="Hitz B.C."/>
            <person name="Karra K."/>
            <person name="Nash R.S."/>
            <person name="Weng S."/>
            <person name="Wong E.D."/>
            <person name="Lloyd P."/>
            <person name="Skrzypek M.S."/>
            <person name="Miyasato S.R."/>
            <person name="Simison M."/>
            <person name="Cherry J.M."/>
        </authorList>
    </citation>
    <scope>GENOME REANNOTATION</scope>
    <source>
        <strain>ATCC 204508 / S288c</strain>
    </source>
</reference>
<reference key="3">
    <citation type="journal article" date="1997" name="Mol. Cell. Biol.">
        <title>Yap, a novel family of eight bZIP proteins in Saccharomyces cerevisiae with distinct biological functions.</title>
        <authorList>
            <person name="Fernandes L."/>
            <person name="Rodrigues-Pousada C."/>
            <person name="Struhl K."/>
        </authorList>
    </citation>
    <scope>FUNCTION</scope>
    <scope>ISOLATION OF YAP FAMILY PROTEINS</scope>
</reference>
<reference key="4">
    <citation type="journal article" date="1999" name="J. Bacteriol.">
        <title>Isolation of a putative Candida albicans transcriptional regulator involved in pleiotropic drug resistance by functional complementation of a pdr1 pdr3 mutation in Saccharomyces cerevisiae.</title>
        <authorList>
            <person name="Talibi D."/>
            <person name="Raymond M."/>
        </authorList>
    </citation>
    <scope>FUNCTION</scope>
    <scope>MULTIDRUG RESISTANCE</scope>
</reference>
<reference key="5">
    <citation type="journal article" date="2001" name="Yeast">
        <title>Functional isolation of the Candida albicans FCR3 gene encoding a bZip transcription factor homologous to Saccharomyces cerevisiae Yap3p.</title>
        <authorList>
            <person name="Yang X."/>
            <person name="Talibi D."/>
            <person name="Weber S."/>
            <person name="Poisson G."/>
            <person name="Raymond M."/>
        </authorList>
    </citation>
    <scope>FUNCTION</scope>
    <scope>MULTIDRUG RESISTANCE</scope>
</reference>
<reference key="6">
    <citation type="journal article" date="2002" name="Funct. Integr. Genomics">
        <title>Two-hybrid-based analysis of protein-protein interactions of the yeast multidrug resistance protein, Pdr5p.</title>
        <authorList>
            <person name="Subba Rao G."/>
            <person name="Bachhawat A.K."/>
            <person name="Gupta C.M."/>
        </authorList>
    </citation>
    <scope>FUNCTION</scope>
    <scope>INTERACTION WITH PDR5</scope>
</reference>
<reference key="7">
    <citation type="journal article" date="2003" name="Nature">
        <title>Global analysis of protein localization in budding yeast.</title>
        <authorList>
            <person name="Huh W.-K."/>
            <person name="Falvo J.V."/>
            <person name="Gerke L.C."/>
            <person name="Carroll A.S."/>
            <person name="Howson R.W."/>
            <person name="Weissman J.S."/>
            <person name="O'Shea E.K."/>
        </authorList>
    </citation>
    <scope>SUBCELLULAR LOCATION [LARGE SCALE ANALYSIS]</scope>
</reference>
<reference key="8">
    <citation type="journal article" date="2003" name="Nature">
        <title>Global analysis of protein expression in yeast.</title>
        <authorList>
            <person name="Ghaemmaghami S."/>
            <person name="Huh W.-K."/>
            <person name="Bower K."/>
            <person name="Howson R.W."/>
            <person name="Belle A."/>
            <person name="Dephoure N."/>
            <person name="O'Shea E.K."/>
            <person name="Weissman J.S."/>
        </authorList>
    </citation>
    <scope>LEVEL OF PROTEIN EXPRESSION [LARGE SCALE ANALYSIS]</scope>
</reference>
<reference key="9">
    <citation type="journal article" date="2008" name="Mol. Cell. Proteomics">
        <title>A multidimensional chromatography technology for in-depth phosphoproteome analysis.</title>
        <authorList>
            <person name="Albuquerque C.P."/>
            <person name="Smolka M.B."/>
            <person name="Payne S.H."/>
            <person name="Bafna V."/>
            <person name="Eng J."/>
            <person name="Zhou H."/>
        </authorList>
    </citation>
    <scope>IDENTIFICATION BY MASS SPECTROMETRY [LARGE SCALE ANALYSIS]</scope>
</reference>
<reference key="10">
    <citation type="journal article" date="2009" name="Science">
        <title>Global analysis of Cdk1 substrate phosphorylation sites provides insights into evolution.</title>
        <authorList>
            <person name="Holt L.J."/>
            <person name="Tuch B.B."/>
            <person name="Villen J."/>
            <person name="Johnson A.D."/>
            <person name="Gygi S.P."/>
            <person name="Morgan D.O."/>
        </authorList>
    </citation>
    <scope>PHOSPHORYLATION [LARGE SCALE ANALYSIS] AT SER-135</scope>
    <scope>IDENTIFICATION BY MASS SPECTROMETRY [LARGE SCALE ANALYSIS]</scope>
</reference>
<protein>
    <recommendedName>
        <fullName>AP-1-like transcription factor YAP3</fullName>
    </recommendedName>
</protein>
<gene>
    <name type="primary">YAP3</name>
    <name type="ordered locus">YHL009C</name>
</gene>
<keyword id="KW-0010">Activator</keyword>
<keyword id="KW-0963">Cytoplasm</keyword>
<keyword id="KW-0238">DNA-binding</keyword>
<keyword id="KW-0539">Nucleus</keyword>
<keyword id="KW-0597">Phosphoprotein</keyword>
<keyword id="KW-1185">Reference proteome</keyword>
<keyword id="KW-0804">Transcription</keyword>
<keyword id="KW-0805">Transcription regulation</keyword>
<organism>
    <name type="scientific">Saccharomyces cerevisiae (strain ATCC 204508 / S288c)</name>
    <name type="common">Baker's yeast</name>
    <dbReference type="NCBI Taxonomy" id="559292"/>
    <lineage>
        <taxon>Eukaryota</taxon>
        <taxon>Fungi</taxon>
        <taxon>Dikarya</taxon>
        <taxon>Ascomycota</taxon>
        <taxon>Saccharomycotina</taxon>
        <taxon>Saccharomycetes</taxon>
        <taxon>Saccharomycetales</taxon>
        <taxon>Saccharomycetaceae</taxon>
        <taxon>Saccharomyces</taxon>
    </lineage>
</organism>
<sequence length="330" mass="37955">MTPSNMDDNTSGFMKFINPQCQEEDCCIRNSLFQEDSKCIKQQPDLLSEQTAPFPILEDQCPALNLDRSNNDLLLQNNISFPKGSDLQAIQLTPISGDYSTYVMADNNNNDNDSYSNTNYFSKNNGISPSSRSPSVAHNENVPDDSKAKKKAQNRAAQKAFRERKEARMKELQDKLLESERNRQSLLKEIEELRKANTEINAENRLLLRSGNENFSKDIEDDTNYKYSFPTKDEFFTSMVLESKLNHKGKYSLKDNEIMKRNTQYTDEAGRHVLTVPATWEYLYKLSEERDFDVTYVMSKLQGQECCHTHGPAYPRSLIDFLVEEATLNE</sequence>
<comment type="function">
    <text evidence="1 4 5 8 9">Transcription activator involved in the regulation of genes expressed in response to environmental changes. When overexpressed it activates transcription of the multidrug resistance ABC transporter PDR5, thus conferring resistance to the fungicide fluconazole (FCZ) and cycloheximide. When overexpressed, it also confers, independent of PDR5, increased resistance to 4-nitroquinoline-N-oxide (4-NQO) (By similarity). Preferentially binds 5'-TTACTAA-3'.</text>
</comment>
<comment type="subunit">
    <text evidence="1 5">Homodimer (By similarity). Interacts with the C-terminal, cytoplasmic tail of the multidrug resistance ABC transporter PDR5.</text>
</comment>
<comment type="subcellular location">
    <subcellularLocation>
        <location evidence="6">Cytoplasm</location>
    </subcellularLocation>
    <subcellularLocation>
        <location evidence="2 6">Nucleus</location>
    </subcellularLocation>
</comment>
<comment type="miscellaneous">
    <text>One of 8 closely related fungi-specific YAP proteins (YAP1 to YAP8), which all seem to be transcription activators of the environmental stress response and metabolism control pathways and to have similar but not identical DNA binding specificities.</text>
</comment>
<comment type="miscellaneous">
    <text evidence="7">Present with 1700 molecules/cell in log phase SD medium.</text>
</comment>
<comment type="similarity">
    <text evidence="10">Belongs to the bZIP family. YAP subfamily.</text>
</comment>
<dbReference type="EMBL" id="U11581">
    <property type="protein sequence ID" value="AAB69745.1"/>
    <property type="molecule type" value="Genomic_DNA"/>
</dbReference>
<dbReference type="EMBL" id="BK006934">
    <property type="protein sequence ID" value="DAA06677.1"/>
    <property type="molecule type" value="Genomic_DNA"/>
</dbReference>
<dbReference type="PIR" id="S46819">
    <property type="entry name" value="S46819"/>
</dbReference>
<dbReference type="RefSeq" id="NP_011854.1">
    <property type="nucleotide sequence ID" value="NM_001179089.1"/>
</dbReference>
<dbReference type="SMR" id="P38749"/>
<dbReference type="BioGRID" id="36414">
    <property type="interactions" value="77"/>
</dbReference>
<dbReference type="DIP" id="DIP-1668N"/>
<dbReference type="FunCoup" id="P38749">
    <property type="interactions" value="454"/>
</dbReference>
<dbReference type="IntAct" id="P38749">
    <property type="interactions" value="10"/>
</dbReference>
<dbReference type="MINT" id="P38749"/>
<dbReference type="STRING" id="4932.YHL009C"/>
<dbReference type="iPTMnet" id="P38749"/>
<dbReference type="PaxDb" id="4932-YHL009C"/>
<dbReference type="PeptideAtlas" id="P38749"/>
<dbReference type="EnsemblFungi" id="YHL009C_mRNA">
    <property type="protein sequence ID" value="YHL009C"/>
    <property type="gene ID" value="YHL009C"/>
</dbReference>
<dbReference type="GeneID" id="856377"/>
<dbReference type="KEGG" id="sce:YHL009C"/>
<dbReference type="AGR" id="SGD:S000001001"/>
<dbReference type="SGD" id="S000001001">
    <property type="gene designation" value="YAP3"/>
</dbReference>
<dbReference type="VEuPathDB" id="FungiDB:YHL009C"/>
<dbReference type="eggNOG" id="ENOG502S2TX">
    <property type="taxonomic scope" value="Eukaryota"/>
</dbReference>
<dbReference type="HOGENOM" id="CLU_071890_0_0_1"/>
<dbReference type="InParanoid" id="P38749"/>
<dbReference type="OMA" id="EDCCIRN"/>
<dbReference type="OrthoDB" id="4940293at2759"/>
<dbReference type="BioCyc" id="YEAST:G3O-31031-MONOMER"/>
<dbReference type="BioGRID-ORCS" id="856377">
    <property type="hits" value="0 hits in 13 CRISPR screens"/>
</dbReference>
<dbReference type="PRO" id="PR:P38749"/>
<dbReference type="Proteomes" id="UP000002311">
    <property type="component" value="Chromosome VIII"/>
</dbReference>
<dbReference type="RNAct" id="P38749">
    <property type="molecule type" value="protein"/>
</dbReference>
<dbReference type="GO" id="GO:0005737">
    <property type="term" value="C:cytoplasm"/>
    <property type="evidence" value="ECO:0007669"/>
    <property type="project" value="UniProtKB-SubCell"/>
</dbReference>
<dbReference type="GO" id="GO:0005634">
    <property type="term" value="C:nucleus"/>
    <property type="evidence" value="ECO:0000305"/>
    <property type="project" value="SGD"/>
</dbReference>
<dbReference type="GO" id="GO:0090575">
    <property type="term" value="C:RNA polymerase II transcription regulator complex"/>
    <property type="evidence" value="ECO:0000318"/>
    <property type="project" value="GO_Central"/>
</dbReference>
<dbReference type="GO" id="GO:0001228">
    <property type="term" value="F:DNA-binding transcription activator activity, RNA polymerase II-specific"/>
    <property type="evidence" value="ECO:0000318"/>
    <property type="project" value="GO_Central"/>
</dbReference>
<dbReference type="GO" id="GO:0003700">
    <property type="term" value="F:DNA-binding transcription factor activity"/>
    <property type="evidence" value="ECO:0000314"/>
    <property type="project" value="SGD"/>
</dbReference>
<dbReference type="GO" id="GO:0043565">
    <property type="term" value="F:sequence-specific DNA binding"/>
    <property type="evidence" value="ECO:0007005"/>
    <property type="project" value="SGD"/>
</dbReference>
<dbReference type="GO" id="GO:0000976">
    <property type="term" value="F:transcription cis-regulatory region binding"/>
    <property type="evidence" value="ECO:0000318"/>
    <property type="project" value="GO_Central"/>
</dbReference>
<dbReference type="GO" id="GO:0006357">
    <property type="term" value="P:regulation of transcription by RNA polymerase II"/>
    <property type="evidence" value="ECO:0000314"/>
    <property type="project" value="SGD"/>
</dbReference>
<dbReference type="CDD" id="cd14688">
    <property type="entry name" value="bZIP_YAP"/>
    <property type="match status" value="1"/>
</dbReference>
<dbReference type="Gene3D" id="1.20.5.170">
    <property type="match status" value="1"/>
</dbReference>
<dbReference type="InterPro" id="IPR050936">
    <property type="entry name" value="AP-1-like"/>
</dbReference>
<dbReference type="InterPro" id="IPR004827">
    <property type="entry name" value="bZIP"/>
</dbReference>
<dbReference type="InterPro" id="IPR046347">
    <property type="entry name" value="bZIP_sf"/>
</dbReference>
<dbReference type="PANTHER" id="PTHR40621:SF8">
    <property type="entry name" value="AP-1-LIKE TRANSCRIPTION FACTOR YAP3"/>
    <property type="match status" value="1"/>
</dbReference>
<dbReference type="PANTHER" id="PTHR40621">
    <property type="entry name" value="TRANSCRIPTION FACTOR KAPC-RELATED"/>
    <property type="match status" value="1"/>
</dbReference>
<dbReference type="Pfam" id="PF00170">
    <property type="entry name" value="bZIP_1"/>
    <property type="match status" value="1"/>
</dbReference>
<dbReference type="SMART" id="SM00338">
    <property type="entry name" value="BRLZ"/>
    <property type="match status" value="1"/>
</dbReference>
<dbReference type="SUPFAM" id="SSF57959">
    <property type="entry name" value="Leucine zipper domain"/>
    <property type="match status" value="1"/>
</dbReference>
<dbReference type="PROSITE" id="PS50217">
    <property type="entry name" value="BZIP"/>
    <property type="match status" value="1"/>
</dbReference>
<dbReference type="PROSITE" id="PS00036">
    <property type="entry name" value="BZIP_BASIC"/>
    <property type="match status" value="1"/>
</dbReference>
<feature type="chain" id="PRO_0000076523" description="AP-1-like transcription factor YAP3">
    <location>
        <begin position="1"/>
        <end position="330"/>
    </location>
</feature>
<feature type="domain" description="bZIP" evidence="2">
    <location>
        <begin position="144"/>
        <end position="207"/>
    </location>
</feature>
<feature type="region of interest" description="Disordered" evidence="3">
    <location>
        <begin position="114"/>
        <end position="150"/>
    </location>
</feature>
<feature type="region of interest" description="Basic motif" evidence="2">
    <location>
        <begin position="147"/>
        <end position="168"/>
    </location>
</feature>
<feature type="region of interest" description="Leucine-zipper" evidence="2">
    <location>
        <begin position="172"/>
        <end position="207"/>
    </location>
</feature>
<feature type="compositionally biased region" description="Polar residues" evidence="3">
    <location>
        <begin position="121"/>
        <end position="138"/>
    </location>
</feature>
<feature type="modified residue" description="Phosphoserine" evidence="11">
    <location>
        <position position="135"/>
    </location>
</feature>
<proteinExistence type="evidence at protein level"/>
<accession>P38749</accession>
<accession>D3DKQ4</accession>